<reference key="1">
    <citation type="journal article" date="2008" name="J. Bacteriol.">
        <title>The genome of Heliobacterium modesticaldum, a phototrophic representative of the Firmicutes containing the simplest photosynthetic apparatus.</title>
        <authorList>
            <person name="Sattley W.M."/>
            <person name="Madigan M.T."/>
            <person name="Swingley W.D."/>
            <person name="Cheung P.C."/>
            <person name="Clocksin K.M."/>
            <person name="Conrad A.L."/>
            <person name="Dejesa L.C."/>
            <person name="Honchak B.M."/>
            <person name="Jung D.O."/>
            <person name="Karbach L.E."/>
            <person name="Kurdoglu A."/>
            <person name="Lahiri S."/>
            <person name="Mastrian S.D."/>
            <person name="Page L.E."/>
            <person name="Taylor H.L."/>
            <person name="Wang Z.T."/>
            <person name="Raymond J."/>
            <person name="Chen M."/>
            <person name="Blankenship R.E."/>
            <person name="Touchman J.W."/>
        </authorList>
    </citation>
    <scope>NUCLEOTIDE SEQUENCE [LARGE SCALE GENOMIC DNA]</scope>
    <source>
        <strain>ATCC 51547 / Ice1</strain>
    </source>
</reference>
<evidence type="ECO:0000250" key="1"/>
<evidence type="ECO:0000255" key="2">
    <source>
        <dbReference type="HAMAP-Rule" id="MF_00403"/>
    </source>
</evidence>
<evidence type="ECO:0000256" key="3">
    <source>
        <dbReference type="SAM" id="MobiDB-lite"/>
    </source>
</evidence>
<evidence type="ECO:0000305" key="4"/>
<organism>
    <name type="scientific">Heliobacterium modesticaldum (strain ATCC 51547 / Ice1)</name>
    <dbReference type="NCBI Taxonomy" id="498761"/>
    <lineage>
        <taxon>Bacteria</taxon>
        <taxon>Bacillati</taxon>
        <taxon>Bacillota</taxon>
        <taxon>Clostridia</taxon>
        <taxon>Eubacteriales</taxon>
        <taxon>Heliobacteriaceae</taxon>
        <taxon>Heliomicrobium</taxon>
    </lineage>
</organism>
<gene>
    <name evidence="2" type="primary">rpsL</name>
    <name type="ordered locus">Helmi_13250</name>
    <name type="ORF">HM1_1373</name>
</gene>
<feature type="chain" id="PRO_1000194178" description="Small ribosomal subunit protein uS12">
    <location>
        <begin position="1"/>
        <end position="138"/>
    </location>
</feature>
<feature type="region of interest" description="Disordered" evidence="3">
    <location>
        <begin position="101"/>
        <end position="138"/>
    </location>
</feature>
<feature type="compositionally biased region" description="Polar residues" evidence="3">
    <location>
        <begin position="105"/>
        <end position="114"/>
    </location>
</feature>
<feature type="compositionally biased region" description="Low complexity" evidence="3">
    <location>
        <begin position="125"/>
        <end position="138"/>
    </location>
</feature>
<feature type="modified residue" description="3-methylthioaspartic acid" evidence="1">
    <location>
        <position position="89"/>
    </location>
</feature>
<proteinExistence type="inferred from homology"/>
<sequence>MPTISQLIRKGREVLTEKSTAPALKECPQKRGVCTRVYTTTPKKPNSALRKVARVRLTNGVEVTAYIPGIGHNLQEHSVVLVRGGRVKDLPGVRYHIVRGALDTAGTQNRNQGRSKYGTKRPKKGAATAAKGPVKGKK</sequence>
<name>RS12_HELMI</name>
<accession>B0TC51</accession>
<protein>
    <recommendedName>
        <fullName evidence="2">Small ribosomal subunit protein uS12</fullName>
    </recommendedName>
    <alternativeName>
        <fullName evidence="4">30S ribosomal protein S12</fullName>
    </alternativeName>
</protein>
<dbReference type="EMBL" id="CP000930">
    <property type="protein sequence ID" value="ABZ83950.1"/>
    <property type="molecule type" value="Genomic_DNA"/>
</dbReference>
<dbReference type="RefSeq" id="WP_012282466.1">
    <property type="nucleotide sequence ID" value="NC_010337.2"/>
</dbReference>
<dbReference type="SMR" id="B0TC51"/>
<dbReference type="STRING" id="498761.HM1_1373"/>
<dbReference type="KEGG" id="hmo:HM1_1373"/>
<dbReference type="eggNOG" id="COG0048">
    <property type="taxonomic scope" value="Bacteria"/>
</dbReference>
<dbReference type="HOGENOM" id="CLU_104295_1_2_9"/>
<dbReference type="OrthoDB" id="9802366at2"/>
<dbReference type="Proteomes" id="UP000008550">
    <property type="component" value="Chromosome"/>
</dbReference>
<dbReference type="GO" id="GO:0015935">
    <property type="term" value="C:small ribosomal subunit"/>
    <property type="evidence" value="ECO:0007669"/>
    <property type="project" value="InterPro"/>
</dbReference>
<dbReference type="GO" id="GO:0019843">
    <property type="term" value="F:rRNA binding"/>
    <property type="evidence" value="ECO:0007669"/>
    <property type="project" value="UniProtKB-UniRule"/>
</dbReference>
<dbReference type="GO" id="GO:0003735">
    <property type="term" value="F:structural constituent of ribosome"/>
    <property type="evidence" value="ECO:0007669"/>
    <property type="project" value="InterPro"/>
</dbReference>
<dbReference type="GO" id="GO:0000049">
    <property type="term" value="F:tRNA binding"/>
    <property type="evidence" value="ECO:0007669"/>
    <property type="project" value="UniProtKB-UniRule"/>
</dbReference>
<dbReference type="GO" id="GO:0006412">
    <property type="term" value="P:translation"/>
    <property type="evidence" value="ECO:0007669"/>
    <property type="project" value="UniProtKB-UniRule"/>
</dbReference>
<dbReference type="CDD" id="cd03368">
    <property type="entry name" value="Ribosomal_S12"/>
    <property type="match status" value="1"/>
</dbReference>
<dbReference type="FunFam" id="2.40.50.140:FF:000001">
    <property type="entry name" value="30S ribosomal protein S12"/>
    <property type="match status" value="1"/>
</dbReference>
<dbReference type="Gene3D" id="2.40.50.140">
    <property type="entry name" value="Nucleic acid-binding proteins"/>
    <property type="match status" value="1"/>
</dbReference>
<dbReference type="HAMAP" id="MF_00403_B">
    <property type="entry name" value="Ribosomal_uS12_B"/>
    <property type="match status" value="1"/>
</dbReference>
<dbReference type="InterPro" id="IPR012340">
    <property type="entry name" value="NA-bd_OB-fold"/>
</dbReference>
<dbReference type="InterPro" id="IPR006032">
    <property type="entry name" value="Ribosomal_uS12"/>
</dbReference>
<dbReference type="InterPro" id="IPR005679">
    <property type="entry name" value="Ribosomal_uS12_bac"/>
</dbReference>
<dbReference type="NCBIfam" id="TIGR00981">
    <property type="entry name" value="rpsL_bact"/>
    <property type="match status" value="1"/>
</dbReference>
<dbReference type="PANTHER" id="PTHR11652">
    <property type="entry name" value="30S RIBOSOMAL PROTEIN S12 FAMILY MEMBER"/>
    <property type="match status" value="1"/>
</dbReference>
<dbReference type="Pfam" id="PF00164">
    <property type="entry name" value="Ribosom_S12_S23"/>
    <property type="match status" value="1"/>
</dbReference>
<dbReference type="PIRSF" id="PIRSF002133">
    <property type="entry name" value="Ribosomal_S12/S23"/>
    <property type="match status" value="1"/>
</dbReference>
<dbReference type="PRINTS" id="PR01034">
    <property type="entry name" value="RIBOSOMALS12"/>
</dbReference>
<dbReference type="SUPFAM" id="SSF50249">
    <property type="entry name" value="Nucleic acid-binding proteins"/>
    <property type="match status" value="1"/>
</dbReference>
<dbReference type="PROSITE" id="PS00055">
    <property type="entry name" value="RIBOSOMAL_S12"/>
    <property type="match status" value="1"/>
</dbReference>
<keyword id="KW-0488">Methylation</keyword>
<keyword id="KW-1185">Reference proteome</keyword>
<keyword id="KW-0687">Ribonucleoprotein</keyword>
<keyword id="KW-0689">Ribosomal protein</keyword>
<keyword id="KW-0694">RNA-binding</keyword>
<keyword id="KW-0699">rRNA-binding</keyword>
<keyword id="KW-0820">tRNA-binding</keyword>
<comment type="function">
    <text evidence="2">With S4 and S5 plays an important role in translational accuracy.</text>
</comment>
<comment type="function">
    <text evidence="2">Interacts with and stabilizes bases of the 16S rRNA that are involved in tRNA selection in the A site and with the mRNA backbone. Located at the interface of the 30S and 50S subunits, it traverses the body of the 30S subunit contacting proteins on the other side and probably holding the rRNA structure together. The combined cluster of proteins S8, S12 and S17 appears to hold together the shoulder and platform of the 30S subunit.</text>
</comment>
<comment type="subunit">
    <text evidence="2">Part of the 30S ribosomal subunit. Contacts proteins S8 and S17. May interact with IF1 in the 30S initiation complex.</text>
</comment>
<comment type="similarity">
    <text evidence="2">Belongs to the universal ribosomal protein uS12 family.</text>
</comment>